<organism>
    <name type="scientific">Streptococcus pyogenes serotype M3 (strain SSI-1)</name>
    <dbReference type="NCBI Taxonomy" id="193567"/>
    <lineage>
        <taxon>Bacteria</taxon>
        <taxon>Bacillati</taxon>
        <taxon>Bacillota</taxon>
        <taxon>Bacilli</taxon>
        <taxon>Lactobacillales</taxon>
        <taxon>Streptococcaceae</taxon>
        <taxon>Streptococcus</taxon>
    </lineage>
</organism>
<gene>
    <name evidence="1" type="primary">xseB</name>
    <name type="ordered locus">SPs0707</name>
</gene>
<name>EX7S_STRPQ</name>
<accession>P0DH53</accession>
<accession>P67468</accession>
<accession>Q99YX4</accession>
<keyword id="KW-0963">Cytoplasm</keyword>
<keyword id="KW-0269">Exonuclease</keyword>
<keyword id="KW-0378">Hydrolase</keyword>
<keyword id="KW-0540">Nuclease</keyword>
<comment type="function">
    <text evidence="1">Bidirectionally degrades single-stranded DNA into large acid-insoluble oligonucleotides, which are then degraded further into small acid-soluble oligonucleotides.</text>
</comment>
<comment type="catalytic activity">
    <reaction evidence="1">
        <text>Exonucleolytic cleavage in either 5'- to 3'- or 3'- to 5'-direction to yield nucleoside 5'-phosphates.</text>
        <dbReference type="EC" id="3.1.11.6"/>
    </reaction>
</comment>
<comment type="subunit">
    <text evidence="1">Heterooligomer composed of large and small subunits.</text>
</comment>
<comment type="subcellular location">
    <subcellularLocation>
        <location evidence="1">Cytoplasm</location>
    </subcellularLocation>
</comment>
<comment type="similarity">
    <text evidence="1">Belongs to the XseB family.</text>
</comment>
<sequence>MSKTKTFEENLQDLETIVNKLENGDVPLEEAISEFQKGMLLSKELQKTLQAAEKTLVKVMQADGTEVDMDD</sequence>
<dbReference type="EC" id="3.1.11.6" evidence="1"/>
<dbReference type="EMBL" id="BA000034">
    <property type="protein sequence ID" value="BAC63802.1"/>
    <property type="molecule type" value="Genomic_DNA"/>
</dbReference>
<dbReference type="RefSeq" id="WP_002983901.1">
    <property type="nucleotide sequence ID" value="NC_004606.1"/>
</dbReference>
<dbReference type="SMR" id="P0DH53"/>
<dbReference type="KEGG" id="sps:SPs0707"/>
<dbReference type="HOGENOM" id="CLU_145918_3_2_9"/>
<dbReference type="GO" id="GO:0005829">
    <property type="term" value="C:cytosol"/>
    <property type="evidence" value="ECO:0007669"/>
    <property type="project" value="TreeGrafter"/>
</dbReference>
<dbReference type="GO" id="GO:0009318">
    <property type="term" value="C:exodeoxyribonuclease VII complex"/>
    <property type="evidence" value="ECO:0007669"/>
    <property type="project" value="InterPro"/>
</dbReference>
<dbReference type="GO" id="GO:0008855">
    <property type="term" value="F:exodeoxyribonuclease VII activity"/>
    <property type="evidence" value="ECO:0007669"/>
    <property type="project" value="UniProtKB-UniRule"/>
</dbReference>
<dbReference type="GO" id="GO:0006308">
    <property type="term" value="P:DNA catabolic process"/>
    <property type="evidence" value="ECO:0007669"/>
    <property type="project" value="UniProtKB-UniRule"/>
</dbReference>
<dbReference type="Gene3D" id="1.10.287.1040">
    <property type="entry name" value="Exonuclease VII, small subunit"/>
    <property type="match status" value="1"/>
</dbReference>
<dbReference type="HAMAP" id="MF_00337">
    <property type="entry name" value="Exonuc_7_S"/>
    <property type="match status" value="1"/>
</dbReference>
<dbReference type="InterPro" id="IPR003761">
    <property type="entry name" value="Exonuc_VII_S"/>
</dbReference>
<dbReference type="InterPro" id="IPR037004">
    <property type="entry name" value="Exonuc_VII_ssu_sf"/>
</dbReference>
<dbReference type="NCBIfam" id="NF002138">
    <property type="entry name" value="PRK00977.1-2"/>
    <property type="match status" value="1"/>
</dbReference>
<dbReference type="NCBIfam" id="TIGR01280">
    <property type="entry name" value="xseB"/>
    <property type="match status" value="1"/>
</dbReference>
<dbReference type="PANTHER" id="PTHR34137">
    <property type="entry name" value="EXODEOXYRIBONUCLEASE 7 SMALL SUBUNIT"/>
    <property type="match status" value="1"/>
</dbReference>
<dbReference type="PANTHER" id="PTHR34137:SF1">
    <property type="entry name" value="EXODEOXYRIBONUCLEASE 7 SMALL SUBUNIT"/>
    <property type="match status" value="1"/>
</dbReference>
<dbReference type="Pfam" id="PF02609">
    <property type="entry name" value="Exonuc_VII_S"/>
    <property type="match status" value="1"/>
</dbReference>
<dbReference type="PIRSF" id="PIRSF006488">
    <property type="entry name" value="Exonuc_VII_S"/>
    <property type="match status" value="1"/>
</dbReference>
<dbReference type="SUPFAM" id="SSF116842">
    <property type="entry name" value="XseB-like"/>
    <property type="match status" value="1"/>
</dbReference>
<reference key="1">
    <citation type="journal article" date="2003" name="Genome Res.">
        <title>Genome sequence of an M3 strain of Streptococcus pyogenes reveals a large-scale genomic rearrangement in invasive strains and new insights into phage evolution.</title>
        <authorList>
            <person name="Nakagawa I."/>
            <person name="Kurokawa K."/>
            <person name="Yamashita A."/>
            <person name="Nakata M."/>
            <person name="Tomiyasu Y."/>
            <person name="Okahashi N."/>
            <person name="Kawabata S."/>
            <person name="Yamazaki K."/>
            <person name="Shiba T."/>
            <person name="Yasunaga T."/>
            <person name="Hayashi H."/>
            <person name="Hattori M."/>
            <person name="Hamada S."/>
        </authorList>
    </citation>
    <scope>NUCLEOTIDE SEQUENCE [LARGE SCALE GENOMIC DNA]</scope>
    <source>
        <strain>SSI-1</strain>
    </source>
</reference>
<feature type="chain" id="PRO_0000411666" description="Exodeoxyribonuclease 7 small subunit">
    <location>
        <begin position="1"/>
        <end position="71"/>
    </location>
</feature>
<evidence type="ECO:0000255" key="1">
    <source>
        <dbReference type="HAMAP-Rule" id="MF_00337"/>
    </source>
</evidence>
<proteinExistence type="inferred from homology"/>
<protein>
    <recommendedName>
        <fullName evidence="1">Exodeoxyribonuclease 7 small subunit</fullName>
        <ecNumber evidence="1">3.1.11.6</ecNumber>
    </recommendedName>
    <alternativeName>
        <fullName evidence="1">Exodeoxyribonuclease VII small subunit</fullName>
        <shortName evidence="1">Exonuclease VII small subunit</shortName>
    </alternativeName>
</protein>